<comment type="function">
    <text evidence="1">Catalyzes the rearrangement of 1-deoxy-D-xylulose 5-phosphate (DXP) to produce the thiazole phosphate moiety of thiamine. Sulfur is provided by the thiocarboxylate moiety of the carrier protein ThiS. In vitro, sulfur can be provided by H(2)S.</text>
</comment>
<comment type="catalytic activity">
    <reaction evidence="1">
        <text>[ThiS sulfur-carrier protein]-C-terminal-Gly-aminoethanethioate + 2-iminoacetate + 1-deoxy-D-xylulose 5-phosphate = [ThiS sulfur-carrier protein]-C-terminal Gly-Gly + 2-[(2R,5Z)-2-carboxy-4-methylthiazol-5(2H)-ylidene]ethyl phosphate + 2 H2O + H(+)</text>
        <dbReference type="Rhea" id="RHEA:26297"/>
        <dbReference type="Rhea" id="RHEA-COMP:12909"/>
        <dbReference type="Rhea" id="RHEA-COMP:19908"/>
        <dbReference type="ChEBI" id="CHEBI:15377"/>
        <dbReference type="ChEBI" id="CHEBI:15378"/>
        <dbReference type="ChEBI" id="CHEBI:57792"/>
        <dbReference type="ChEBI" id="CHEBI:62899"/>
        <dbReference type="ChEBI" id="CHEBI:77846"/>
        <dbReference type="ChEBI" id="CHEBI:90778"/>
        <dbReference type="ChEBI" id="CHEBI:232372"/>
        <dbReference type="EC" id="2.8.1.10"/>
    </reaction>
</comment>
<comment type="pathway">
    <text evidence="1">Cofactor biosynthesis; thiamine diphosphate biosynthesis.</text>
</comment>
<comment type="subunit">
    <text evidence="1">Homotetramer. Forms heterodimers with either ThiH or ThiS.</text>
</comment>
<comment type="subcellular location">
    <subcellularLocation>
        <location evidence="1">Cytoplasm</location>
    </subcellularLocation>
</comment>
<comment type="similarity">
    <text evidence="1">Belongs to the ThiG family.</text>
</comment>
<accession>Q30U33</accession>
<protein>
    <recommendedName>
        <fullName evidence="1">Thiazole synthase</fullName>
        <ecNumber evidence="1">2.8.1.10</ecNumber>
    </recommendedName>
</protein>
<gene>
    <name evidence="1" type="primary">thiG</name>
    <name type="ordered locus">Suden_0217</name>
</gene>
<organism>
    <name type="scientific">Sulfurimonas denitrificans (strain ATCC 33889 / DSM 1251)</name>
    <name type="common">Thiomicrospira denitrificans (strain ATCC 33889 / DSM 1251)</name>
    <dbReference type="NCBI Taxonomy" id="326298"/>
    <lineage>
        <taxon>Bacteria</taxon>
        <taxon>Pseudomonadati</taxon>
        <taxon>Campylobacterota</taxon>
        <taxon>Epsilonproteobacteria</taxon>
        <taxon>Campylobacterales</taxon>
        <taxon>Sulfurimonadaceae</taxon>
        <taxon>Sulfurimonas</taxon>
    </lineage>
</organism>
<sequence>MQNLLKIGKYELGSRLIVGSGKYKDFQTTKEATLASGSELITVAVRRLNITDPNKENLRDTFKGTNVKFLPNSAGCVTAEEAITTFRLTREATGIDLIKLEVIGDTQKTLYPDVIETIKACQILSKEGFIIMAYTSDDPIMAKRLEDAGAHAIMPLAAPIGSGLGIQNPYNIVFIREAVNLPVIVDAGIGCASDAAYAMELGADGVLTNTAIAGAQNPMMMAEAMKHAVIAGRMSYLSGRIQKRPYATASSPINGMIQF</sequence>
<reference key="1">
    <citation type="journal article" date="2008" name="Appl. Environ. Microbiol.">
        <title>Genome of the epsilonproteobacterial chemolithoautotroph Sulfurimonas denitrificans.</title>
        <authorList>
            <person name="Sievert S.M."/>
            <person name="Scott K.M."/>
            <person name="Klotz M.G."/>
            <person name="Chain P.S.G."/>
            <person name="Hauser L.J."/>
            <person name="Hemp J."/>
            <person name="Huegler M."/>
            <person name="Land M."/>
            <person name="Lapidus A."/>
            <person name="Larimer F.W."/>
            <person name="Lucas S."/>
            <person name="Malfatti S.A."/>
            <person name="Meyer F."/>
            <person name="Paulsen I.T."/>
            <person name="Ren Q."/>
            <person name="Simon J."/>
            <person name="Bailey K."/>
            <person name="Diaz E."/>
            <person name="Fitzpatrick K.A."/>
            <person name="Glover B."/>
            <person name="Gwatney N."/>
            <person name="Korajkic A."/>
            <person name="Long A."/>
            <person name="Mobberley J.M."/>
            <person name="Pantry S.N."/>
            <person name="Pazder G."/>
            <person name="Peterson S."/>
            <person name="Quintanilla J.D."/>
            <person name="Sprinkle R."/>
            <person name="Stephens J."/>
            <person name="Thomas P."/>
            <person name="Vaughn R."/>
            <person name="Weber M.J."/>
            <person name="Wooten L.L."/>
        </authorList>
    </citation>
    <scope>NUCLEOTIDE SEQUENCE [LARGE SCALE GENOMIC DNA]</scope>
    <source>
        <strain>ATCC 33889 / DSM 1251</strain>
    </source>
</reference>
<name>THIG_SULDN</name>
<keyword id="KW-0963">Cytoplasm</keyword>
<keyword id="KW-1185">Reference proteome</keyword>
<keyword id="KW-0704">Schiff base</keyword>
<keyword id="KW-0784">Thiamine biosynthesis</keyword>
<keyword id="KW-0808">Transferase</keyword>
<dbReference type="EC" id="2.8.1.10" evidence="1"/>
<dbReference type="EMBL" id="CP000153">
    <property type="protein sequence ID" value="ABB43498.1"/>
    <property type="molecule type" value="Genomic_DNA"/>
</dbReference>
<dbReference type="RefSeq" id="WP_011371853.1">
    <property type="nucleotide sequence ID" value="NC_007575.1"/>
</dbReference>
<dbReference type="SMR" id="Q30U33"/>
<dbReference type="STRING" id="326298.Suden_0217"/>
<dbReference type="KEGG" id="tdn:Suden_0217"/>
<dbReference type="eggNOG" id="COG2022">
    <property type="taxonomic scope" value="Bacteria"/>
</dbReference>
<dbReference type="HOGENOM" id="CLU_062233_1_0_7"/>
<dbReference type="OrthoDB" id="9805935at2"/>
<dbReference type="UniPathway" id="UPA00060"/>
<dbReference type="Proteomes" id="UP000002714">
    <property type="component" value="Chromosome"/>
</dbReference>
<dbReference type="GO" id="GO:0005737">
    <property type="term" value="C:cytoplasm"/>
    <property type="evidence" value="ECO:0007669"/>
    <property type="project" value="UniProtKB-SubCell"/>
</dbReference>
<dbReference type="GO" id="GO:1990107">
    <property type="term" value="F:thiazole synthase activity"/>
    <property type="evidence" value="ECO:0007669"/>
    <property type="project" value="UniProtKB-EC"/>
</dbReference>
<dbReference type="GO" id="GO:0009229">
    <property type="term" value="P:thiamine diphosphate biosynthetic process"/>
    <property type="evidence" value="ECO:0007669"/>
    <property type="project" value="UniProtKB-UniRule"/>
</dbReference>
<dbReference type="CDD" id="cd04728">
    <property type="entry name" value="ThiG"/>
    <property type="match status" value="1"/>
</dbReference>
<dbReference type="Gene3D" id="3.20.20.70">
    <property type="entry name" value="Aldolase class I"/>
    <property type="match status" value="1"/>
</dbReference>
<dbReference type="HAMAP" id="MF_00443">
    <property type="entry name" value="ThiG"/>
    <property type="match status" value="1"/>
</dbReference>
<dbReference type="InterPro" id="IPR013785">
    <property type="entry name" value="Aldolase_TIM"/>
</dbReference>
<dbReference type="InterPro" id="IPR033983">
    <property type="entry name" value="Thiazole_synthase_ThiG"/>
</dbReference>
<dbReference type="InterPro" id="IPR008867">
    <property type="entry name" value="ThiG"/>
</dbReference>
<dbReference type="PANTHER" id="PTHR34266">
    <property type="entry name" value="THIAZOLE SYNTHASE"/>
    <property type="match status" value="1"/>
</dbReference>
<dbReference type="PANTHER" id="PTHR34266:SF2">
    <property type="entry name" value="THIAZOLE SYNTHASE"/>
    <property type="match status" value="1"/>
</dbReference>
<dbReference type="Pfam" id="PF05690">
    <property type="entry name" value="ThiG"/>
    <property type="match status" value="1"/>
</dbReference>
<dbReference type="SUPFAM" id="SSF110399">
    <property type="entry name" value="ThiG-like"/>
    <property type="match status" value="1"/>
</dbReference>
<evidence type="ECO:0000255" key="1">
    <source>
        <dbReference type="HAMAP-Rule" id="MF_00443"/>
    </source>
</evidence>
<proteinExistence type="inferred from homology"/>
<feature type="chain" id="PRO_0000236375" description="Thiazole synthase">
    <location>
        <begin position="1"/>
        <end position="259"/>
    </location>
</feature>
<feature type="active site" description="Schiff-base intermediate with DXP" evidence="1">
    <location>
        <position position="99"/>
    </location>
</feature>
<feature type="binding site" evidence="1">
    <location>
        <position position="161"/>
    </location>
    <ligand>
        <name>1-deoxy-D-xylulose 5-phosphate</name>
        <dbReference type="ChEBI" id="CHEBI:57792"/>
    </ligand>
</feature>
<feature type="binding site" evidence="1">
    <location>
        <begin position="187"/>
        <end position="188"/>
    </location>
    <ligand>
        <name>1-deoxy-D-xylulose 5-phosphate</name>
        <dbReference type="ChEBI" id="CHEBI:57792"/>
    </ligand>
</feature>
<feature type="binding site" evidence="1">
    <location>
        <begin position="209"/>
        <end position="210"/>
    </location>
    <ligand>
        <name>1-deoxy-D-xylulose 5-phosphate</name>
        <dbReference type="ChEBI" id="CHEBI:57792"/>
    </ligand>
</feature>